<proteinExistence type="evidence at transcript level"/>
<comment type="function">
    <text evidence="8">Synthesizes the galactose-alpha(1,3)-galactose group on the glycosphingolipid isoglobotrihexosylceramide or isogloboside 3 (iGb3) by catalyzing the transfer of galactose from UDP-Galactose to its acceptor molecule Gal-beta-1,4-Glc-ceramide. Can also catalyze the addition of galactose to iGb3 itself to form polygalactose structures.</text>
</comment>
<comment type="catalytic activity">
    <reaction evidence="2">
        <text>a beta-D-galactosyl-(1-&gt;4)-N-acetyl-beta-D-glucosaminyl derivative + UDP-alpha-D-galactose = an alpha-D-galactosyl-(1-&gt;3)-beta-D-galactosyl-(1-&gt;4)-N-acetyl-beta-D-glucosaminyl derivative + UDP + H(+)</text>
        <dbReference type="Rhea" id="RHEA:13013"/>
        <dbReference type="ChEBI" id="CHEBI:15378"/>
        <dbReference type="ChEBI" id="CHEBI:58223"/>
        <dbReference type="ChEBI" id="CHEBI:66914"/>
        <dbReference type="ChEBI" id="CHEBI:133507"/>
        <dbReference type="ChEBI" id="CHEBI:138024"/>
        <dbReference type="EC" id="2.4.1.87"/>
    </reaction>
    <physiologicalReaction direction="left-to-right" evidence="2">
        <dbReference type="Rhea" id="RHEA:13014"/>
    </physiologicalReaction>
</comment>
<comment type="catalytic activity">
    <reaction evidence="2">
        <text>a beta-D-Gal-(1-&gt;4)-beta-D-Glc-(1&lt;-&gt;1)-Cer(d18:1(4E)) + UDP-alpha-D-galactose = an isogloboside iGb3Cer (d18:1(4E)) + UDP + H(+)</text>
        <dbReference type="Rhea" id="RHEA:42000"/>
        <dbReference type="ChEBI" id="CHEBI:15378"/>
        <dbReference type="ChEBI" id="CHEBI:17950"/>
        <dbReference type="ChEBI" id="CHEBI:52570"/>
        <dbReference type="ChEBI" id="CHEBI:58223"/>
        <dbReference type="ChEBI" id="CHEBI:66914"/>
    </reaction>
    <physiologicalReaction direction="left-to-right" evidence="2">
        <dbReference type="Rhea" id="RHEA:42001"/>
    </physiologicalReaction>
</comment>
<comment type="catalytic activity">
    <reaction evidence="2">
        <text>a globoside Gb3Cer + UDP-alpha-D-galactose = a globoside GalGb3Cer + UDP + H(+)</text>
        <dbReference type="Rhea" id="RHEA:56740"/>
        <dbReference type="ChEBI" id="CHEBI:15378"/>
        <dbReference type="ChEBI" id="CHEBI:58223"/>
        <dbReference type="ChEBI" id="CHEBI:66914"/>
        <dbReference type="ChEBI" id="CHEBI:88154"/>
        <dbReference type="ChEBI" id="CHEBI:140743"/>
    </reaction>
    <physiologicalReaction direction="left-to-right" evidence="2">
        <dbReference type="Rhea" id="RHEA:56741"/>
    </physiologicalReaction>
</comment>
<comment type="cofactor">
    <cofactor evidence="1">
        <name>Mn(2+)</name>
        <dbReference type="ChEBI" id="CHEBI:29035"/>
    </cofactor>
</comment>
<comment type="subcellular location">
    <subcellularLocation>
        <location evidence="2">Golgi apparatus</location>
        <location evidence="2">Golgi stack membrane</location>
        <topology evidence="2">Single-pass type II membrane protein</topology>
    </subcellularLocation>
    <text evidence="2">Also found in numerous large vesicles throughout the cytoplasm of the soma.</text>
</comment>
<comment type="tissue specificity">
    <text evidence="5">Expressed in thymus and monocyte derived dendritic cells.</text>
</comment>
<comment type="domain">
    <text evidence="1">The conserved DXD motif is involved in cofactor binding. The manganese ion interacts with the beta-phosphate group of UDP and may also have a role in catalysis (By similarity).</text>
</comment>
<comment type="similarity">
    <text evidence="7">Belongs to the glycosyltransferase 6 family.</text>
</comment>
<comment type="caution">
    <text evidence="6">According to a report, the spliced A3GALT2 mRNA is not detected in human tissues (PubMed:18630988). The functional activity of human A3GALT2 tested by expressing a chimeric protein containing the catalytic domain of human A3GALT2 is unable to synthesize isogloboside 3 (iGb3). Futhermore mutagenesis experiments in rat, show that the mutant 'Asn-253' of human A3GALT2 completely eliminates alpha-1,3-galactosyltransferase activity (PubMed:18630988).</text>
</comment>
<gene>
    <name evidence="9" type="primary">A3GALT2</name>
    <name evidence="9" type="synonym">A3GALT2P</name>
    <name evidence="6" type="synonym">IGBS3S</name>
</gene>
<organism>
    <name type="scientific">Homo sapiens</name>
    <name type="common">Human</name>
    <dbReference type="NCBI Taxonomy" id="9606"/>
    <lineage>
        <taxon>Eukaryota</taxon>
        <taxon>Metazoa</taxon>
        <taxon>Chordata</taxon>
        <taxon>Craniata</taxon>
        <taxon>Vertebrata</taxon>
        <taxon>Euteleostomi</taxon>
        <taxon>Mammalia</taxon>
        <taxon>Eutheria</taxon>
        <taxon>Euarchontoglires</taxon>
        <taxon>Primates</taxon>
        <taxon>Haplorrhini</taxon>
        <taxon>Catarrhini</taxon>
        <taxon>Hominidae</taxon>
        <taxon>Homo</taxon>
    </lineage>
</organism>
<protein>
    <recommendedName>
        <fullName evidence="9">Alpha-1,3-galactosyltransferase 2</fullName>
        <ecNumber evidence="3">2.4.1.87</ecNumber>
    </recommendedName>
    <alternativeName>
        <fullName>Isoglobotriaosylceramide synthase</fullName>
        <shortName evidence="6">iGb3 synthase</shortName>
        <shortName evidence="6">iGb3S</shortName>
    </alternativeName>
</protein>
<evidence type="ECO:0000250" key="1"/>
<evidence type="ECO:0000250" key="2">
    <source>
        <dbReference type="UniProtKB" id="A0A4Z3"/>
    </source>
</evidence>
<evidence type="ECO:0000250" key="3">
    <source>
        <dbReference type="UniProtKB" id="Q3V1N9"/>
    </source>
</evidence>
<evidence type="ECO:0000255" key="4"/>
<evidence type="ECO:0000269" key="5">
    <source>
    </source>
</evidence>
<evidence type="ECO:0000303" key="6">
    <source>
    </source>
</evidence>
<evidence type="ECO:0000305" key="7"/>
<evidence type="ECO:0000305" key="8">
    <source>
    </source>
</evidence>
<evidence type="ECO:0000312" key="9">
    <source>
        <dbReference type="HGNC" id="HGNC:30005"/>
    </source>
</evidence>
<name>A3LT2_HUMAN</name>
<keyword id="KW-0325">Glycoprotein</keyword>
<keyword id="KW-0328">Glycosyltransferase</keyword>
<keyword id="KW-0333">Golgi apparatus</keyword>
<keyword id="KW-0443">Lipid metabolism</keyword>
<keyword id="KW-0464">Manganese</keyword>
<keyword id="KW-0472">Membrane</keyword>
<keyword id="KW-0479">Metal-binding</keyword>
<keyword id="KW-1185">Reference proteome</keyword>
<keyword id="KW-0735">Signal-anchor</keyword>
<keyword id="KW-0808">Transferase</keyword>
<keyword id="KW-0812">Transmembrane</keyword>
<keyword id="KW-1133">Transmembrane helix</keyword>
<sequence length="340" mass="38754">MALKEGLRAWKRIFWRQILLTLGLLGLFLYGLPKFRHLEALIPMGVCPSATMSQLRDNFTGALRPWARPEVLTCTPWGAPIIWDGSFDPDVAKQEARQQNLTIGLTIFAVGRYLEKYLERFLETAEQHFMAGQSVMYYVFTELPGAVPRVALGPGRRLPVERVARERRWQDVSMARMRTLHAALGGLPGREAHFMFCMDVDQHFSGTFGPEALAESVAQLHSWHYHWPSWLLPFERDAHSAAAMAWGQGDFYNHAAVFGGSVAALRGLTAHCAGGLDWDRARGLEARWHDESHLNKFFWLHKPAKVLSPEFCWSPDIGPRAEIRRPRLLWAPKGYRLLRN</sequence>
<reference key="1">
    <citation type="journal article" date="2006" name="Nature">
        <title>The DNA sequence and biological annotation of human chromosome 1.</title>
        <authorList>
            <person name="Gregory S.G."/>
            <person name="Barlow K.F."/>
            <person name="McLay K.E."/>
            <person name="Kaul R."/>
            <person name="Swarbreck D."/>
            <person name="Dunham A."/>
            <person name="Scott C.E."/>
            <person name="Howe K.L."/>
            <person name="Woodfine K."/>
            <person name="Spencer C.C.A."/>
            <person name="Jones M.C."/>
            <person name="Gillson C."/>
            <person name="Searle S."/>
            <person name="Zhou Y."/>
            <person name="Kokocinski F."/>
            <person name="McDonald L."/>
            <person name="Evans R."/>
            <person name="Phillips K."/>
            <person name="Atkinson A."/>
            <person name="Cooper R."/>
            <person name="Jones C."/>
            <person name="Hall R.E."/>
            <person name="Andrews T.D."/>
            <person name="Lloyd C."/>
            <person name="Ainscough R."/>
            <person name="Almeida J.P."/>
            <person name="Ambrose K.D."/>
            <person name="Anderson F."/>
            <person name="Andrew R.W."/>
            <person name="Ashwell R.I.S."/>
            <person name="Aubin K."/>
            <person name="Babbage A.K."/>
            <person name="Bagguley C.L."/>
            <person name="Bailey J."/>
            <person name="Beasley H."/>
            <person name="Bethel G."/>
            <person name="Bird C.P."/>
            <person name="Bray-Allen S."/>
            <person name="Brown J.Y."/>
            <person name="Brown A.J."/>
            <person name="Buckley D."/>
            <person name="Burton J."/>
            <person name="Bye J."/>
            <person name="Carder C."/>
            <person name="Chapman J.C."/>
            <person name="Clark S.Y."/>
            <person name="Clarke G."/>
            <person name="Clee C."/>
            <person name="Cobley V."/>
            <person name="Collier R.E."/>
            <person name="Corby N."/>
            <person name="Coville G.J."/>
            <person name="Davies J."/>
            <person name="Deadman R."/>
            <person name="Dunn M."/>
            <person name="Earthrowl M."/>
            <person name="Ellington A.G."/>
            <person name="Errington H."/>
            <person name="Frankish A."/>
            <person name="Frankland J."/>
            <person name="French L."/>
            <person name="Garner P."/>
            <person name="Garnett J."/>
            <person name="Gay L."/>
            <person name="Ghori M.R.J."/>
            <person name="Gibson R."/>
            <person name="Gilby L.M."/>
            <person name="Gillett W."/>
            <person name="Glithero R.J."/>
            <person name="Grafham D.V."/>
            <person name="Griffiths C."/>
            <person name="Griffiths-Jones S."/>
            <person name="Grocock R."/>
            <person name="Hammond S."/>
            <person name="Harrison E.S.I."/>
            <person name="Hart E."/>
            <person name="Haugen E."/>
            <person name="Heath P.D."/>
            <person name="Holmes S."/>
            <person name="Holt K."/>
            <person name="Howden P.J."/>
            <person name="Hunt A.R."/>
            <person name="Hunt S.E."/>
            <person name="Hunter G."/>
            <person name="Isherwood J."/>
            <person name="James R."/>
            <person name="Johnson C."/>
            <person name="Johnson D."/>
            <person name="Joy A."/>
            <person name="Kay M."/>
            <person name="Kershaw J.K."/>
            <person name="Kibukawa M."/>
            <person name="Kimberley A.M."/>
            <person name="King A."/>
            <person name="Knights A.J."/>
            <person name="Lad H."/>
            <person name="Laird G."/>
            <person name="Lawlor S."/>
            <person name="Leongamornlert D.A."/>
            <person name="Lloyd D.M."/>
            <person name="Loveland J."/>
            <person name="Lovell J."/>
            <person name="Lush M.J."/>
            <person name="Lyne R."/>
            <person name="Martin S."/>
            <person name="Mashreghi-Mohammadi M."/>
            <person name="Matthews L."/>
            <person name="Matthews N.S.W."/>
            <person name="McLaren S."/>
            <person name="Milne S."/>
            <person name="Mistry S."/>
            <person name="Moore M.J.F."/>
            <person name="Nickerson T."/>
            <person name="O'Dell C.N."/>
            <person name="Oliver K."/>
            <person name="Palmeiri A."/>
            <person name="Palmer S.A."/>
            <person name="Parker A."/>
            <person name="Patel D."/>
            <person name="Pearce A.V."/>
            <person name="Peck A.I."/>
            <person name="Pelan S."/>
            <person name="Phelps K."/>
            <person name="Phillimore B.J."/>
            <person name="Plumb R."/>
            <person name="Rajan J."/>
            <person name="Raymond C."/>
            <person name="Rouse G."/>
            <person name="Saenphimmachak C."/>
            <person name="Sehra H.K."/>
            <person name="Sheridan E."/>
            <person name="Shownkeen R."/>
            <person name="Sims S."/>
            <person name="Skuce C.D."/>
            <person name="Smith M."/>
            <person name="Steward C."/>
            <person name="Subramanian S."/>
            <person name="Sycamore N."/>
            <person name="Tracey A."/>
            <person name="Tromans A."/>
            <person name="Van Helmond Z."/>
            <person name="Wall M."/>
            <person name="Wallis J.M."/>
            <person name="White S."/>
            <person name="Whitehead S.L."/>
            <person name="Wilkinson J.E."/>
            <person name="Willey D.L."/>
            <person name="Williams H."/>
            <person name="Wilming L."/>
            <person name="Wray P.W."/>
            <person name="Wu Z."/>
            <person name="Coulson A."/>
            <person name="Vaudin M."/>
            <person name="Sulston J.E."/>
            <person name="Durbin R.M."/>
            <person name="Hubbard T."/>
            <person name="Wooster R."/>
            <person name="Dunham I."/>
            <person name="Carter N.P."/>
            <person name="McVean G."/>
            <person name="Ross M.T."/>
            <person name="Harrow J."/>
            <person name="Olson M.V."/>
            <person name="Beck S."/>
            <person name="Rogers J."/>
            <person name="Bentley D.R."/>
        </authorList>
    </citation>
    <scope>NUCLEOTIDE SEQUENCE [LARGE SCALE GENOMIC DNA]</scope>
</reference>
<reference key="2">
    <citation type="journal article" date="2008" name="PLoS Biol.">
        <title>Humans lack iGb3 due to the absence of functional iGb3-synthase: implications for NKT cell development and transplantation.</title>
        <authorList>
            <person name="Christiansen D."/>
            <person name="Milland J."/>
            <person name="Mouhtouris E."/>
            <person name="Vaughan H."/>
            <person name="Pellicci D.G."/>
            <person name="McConville M.J."/>
            <person name="Godfrey D.I."/>
            <person name="Sandrin M.S."/>
        </authorList>
    </citation>
    <scope>MISCELLANEOUS</scope>
</reference>
<reference key="3">
    <citation type="journal article" date="2013" name="J. Carbohydr. Chem.">
        <title>Lack of iGb3 and isoglobo-Series glycosphingolipids in pig organs used for xenotransplantation: implications for natural killer T-cell biology.</title>
        <authorList>
            <person name="Tahiri F."/>
            <person name="Li Y."/>
            <person name="Hawke D."/>
            <person name="Ganiko L."/>
            <person name="Almeida I."/>
            <person name="Levery S."/>
            <person name="Zhou D."/>
        </authorList>
    </citation>
    <scope>TISSUE SPECIFICITY</scope>
    <scope>FUNCTION</scope>
</reference>
<feature type="chain" id="PRO_0000436524" description="Alpha-1,3-galactosyltransferase 2">
    <location>
        <begin position="1"/>
        <end position="340"/>
    </location>
</feature>
<feature type="topological domain" description="Cytoplasmic" evidence="7">
    <location>
        <begin position="1"/>
        <end position="12"/>
    </location>
</feature>
<feature type="transmembrane region" description="Helical; Signal-anchor for type II membrane protein" evidence="4">
    <location>
        <begin position="13"/>
        <end position="32"/>
    </location>
</feature>
<feature type="topological domain" description="Lumenal" evidence="7">
    <location>
        <begin position="33"/>
        <end position="340"/>
    </location>
</feature>
<feature type="binding site" evidence="1">
    <location>
        <position position="199"/>
    </location>
    <ligand>
        <name>Mn(2+)</name>
        <dbReference type="ChEBI" id="CHEBI:29035"/>
    </ligand>
</feature>
<feature type="binding site" evidence="1">
    <location>
        <position position="201"/>
    </location>
    <ligand>
        <name>Mn(2+)</name>
        <dbReference type="ChEBI" id="CHEBI:29035"/>
    </ligand>
</feature>
<feature type="glycosylation site" description="N-linked (GlcNAc...) asparagine" evidence="4">
    <location>
        <position position="58"/>
    </location>
</feature>
<feature type="glycosylation site" description="N-linked (GlcNAc...) asparagine" evidence="4">
    <location>
        <position position="100"/>
    </location>
</feature>
<accession>U3KPV4</accession>
<dbReference type="EC" id="2.4.1.87" evidence="3"/>
<dbReference type="EMBL" id="AL513327">
    <property type="status" value="NOT_ANNOTATED_CDS"/>
    <property type="molecule type" value="Genomic_DNA"/>
</dbReference>
<dbReference type="CCDS" id="CCDS60080.1"/>
<dbReference type="RefSeq" id="NP_001073907.1">
    <property type="nucleotide sequence ID" value="NM_001080438.1"/>
</dbReference>
<dbReference type="SMR" id="U3KPV4"/>
<dbReference type="FunCoup" id="U3KPV4">
    <property type="interactions" value="19"/>
</dbReference>
<dbReference type="STRING" id="9606.ENSP00000475261"/>
<dbReference type="GlyCosmos" id="U3KPV4">
    <property type="glycosylation" value="2 sites, No reported glycans"/>
</dbReference>
<dbReference type="GlyGen" id="U3KPV4">
    <property type="glycosylation" value="2 sites"/>
</dbReference>
<dbReference type="BioMuta" id="A3GALT2"/>
<dbReference type="MassIVE" id="U3KPV4"/>
<dbReference type="PaxDb" id="9606-ENSP00000475261"/>
<dbReference type="Antibodypedia" id="76335">
    <property type="antibodies" value="3 antibodies from 1 providers"/>
</dbReference>
<dbReference type="DNASU" id="127550"/>
<dbReference type="Ensembl" id="ENST00000442999.3">
    <property type="protein sequence ID" value="ENSP00000475261.1"/>
    <property type="gene ID" value="ENSG00000184389.9"/>
</dbReference>
<dbReference type="GeneID" id="127550"/>
<dbReference type="KEGG" id="hsa:127550"/>
<dbReference type="MANE-Select" id="ENST00000442999.3">
    <property type="protein sequence ID" value="ENSP00000475261.1"/>
    <property type="RefSeq nucleotide sequence ID" value="NM_001080438.1"/>
    <property type="RefSeq protein sequence ID" value="NP_001073907.1"/>
</dbReference>
<dbReference type="UCSC" id="uc031plq.1">
    <property type="organism name" value="human"/>
</dbReference>
<dbReference type="AGR" id="HGNC:30005"/>
<dbReference type="CTD" id="127550"/>
<dbReference type="DisGeNET" id="127550"/>
<dbReference type="GeneCards" id="A3GALT2"/>
<dbReference type="HGNC" id="HGNC:30005">
    <property type="gene designation" value="A3GALT2"/>
</dbReference>
<dbReference type="HPA" id="ENSG00000184389">
    <property type="expression patterns" value="Not detected"/>
</dbReference>
<dbReference type="MIM" id="619850">
    <property type="type" value="gene"/>
</dbReference>
<dbReference type="neXtProt" id="NX_U3KPV4"/>
<dbReference type="OpenTargets" id="ENSG00000184389"/>
<dbReference type="VEuPathDB" id="HostDB:ENSG00000184389"/>
<dbReference type="eggNOG" id="ENOG502QW2H">
    <property type="taxonomic scope" value="Eukaryota"/>
</dbReference>
<dbReference type="GeneTree" id="ENSGT00950000182858"/>
<dbReference type="HOGENOM" id="CLU_062445_1_0_1"/>
<dbReference type="InParanoid" id="U3KPV4"/>
<dbReference type="OMA" id="RFVFCMD"/>
<dbReference type="OrthoDB" id="10013941at2759"/>
<dbReference type="PAN-GO" id="U3KPV4">
    <property type="GO annotations" value="4 GO annotations based on evolutionary models"/>
</dbReference>
<dbReference type="PhylomeDB" id="U3KPV4"/>
<dbReference type="PathwayCommons" id="U3KPV4"/>
<dbReference type="SignaLink" id="U3KPV4"/>
<dbReference type="BioGRID-ORCS" id="127550">
    <property type="hits" value="11 hits in 1059 CRISPR screens"/>
</dbReference>
<dbReference type="GenomeRNAi" id="127550"/>
<dbReference type="Pharos" id="U3KPV4">
    <property type="development level" value="Tdark"/>
</dbReference>
<dbReference type="PRO" id="PR:U3KPV4"/>
<dbReference type="Proteomes" id="UP000005640">
    <property type="component" value="Chromosome 1"/>
</dbReference>
<dbReference type="RNAct" id="U3KPV4">
    <property type="molecule type" value="protein"/>
</dbReference>
<dbReference type="Bgee" id="ENSG00000184389">
    <property type="expression patterns" value="Expressed in male germ line stem cell (sensu Vertebrata) in testis and 69 other cell types or tissues"/>
</dbReference>
<dbReference type="GO" id="GO:0005794">
    <property type="term" value="C:Golgi apparatus"/>
    <property type="evidence" value="ECO:0000318"/>
    <property type="project" value="GO_Central"/>
</dbReference>
<dbReference type="GO" id="GO:0032580">
    <property type="term" value="C:Golgi cisterna membrane"/>
    <property type="evidence" value="ECO:0007669"/>
    <property type="project" value="UniProtKB-SubCell"/>
</dbReference>
<dbReference type="GO" id="GO:0031982">
    <property type="term" value="C:vesicle"/>
    <property type="evidence" value="ECO:0000318"/>
    <property type="project" value="GO_Central"/>
</dbReference>
<dbReference type="GO" id="GO:0016757">
    <property type="term" value="F:glycosyltransferase activity"/>
    <property type="evidence" value="ECO:0000318"/>
    <property type="project" value="GO_Central"/>
</dbReference>
<dbReference type="GO" id="GO:0046872">
    <property type="term" value="F:metal ion binding"/>
    <property type="evidence" value="ECO:0007669"/>
    <property type="project" value="UniProtKB-KW"/>
</dbReference>
<dbReference type="GO" id="GO:0047276">
    <property type="term" value="F:N-acetyllactosaminide 3-alpha-galactosyltransferase activity"/>
    <property type="evidence" value="ECO:0000250"/>
    <property type="project" value="UniProtKB"/>
</dbReference>
<dbReference type="GO" id="GO:0005975">
    <property type="term" value="P:carbohydrate metabolic process"/>
    <property type="evidence" value="ECO:0007669"/>
    <property type="project" value="InterPro"/>
</dbReference>
<dbReference type="GO" id="GO:0006688">
    <property type="term" value="P:glycosphingolipid biosynthetic process"/>
    <property type="evidence" value="ECO:0007669"/>
    <property type="project" value="Ensembl"/>
</dbReference>
<dbReference type="GO" id="GO:0030259">
    <property type="term" value="P:lipid glycosylation"/>
    <property type="evidence" value="ECO:0000318"/>
    <property type="project" value="GO_Central"/>
</dbReference>
<dbReference type="CDD" id="cd02515">
    <property type="entry name" value="Glyco_transf_6"/>
    <property type="match status" value="1"/>
</dbReference>
<dbReference type="FunFam" id="3.90.550.10:FF:000022">
    <property type="entry name" value="Histo-blood group ABO system transferase"/>
    <property type="match status" value="1"/>
</dbReference>
<dbReference type="Gene3D" id="3.90.550.10">
    <property type="entry name" value="Spore Coat Polysaccharide Biosynthesis Protein SpsA, Chain A"/>
    <property type="match status" value="1"/>
</dbReference>
<dbReference type="InterPro" id="IPR005076">
    <property type="entry name" value="Glyco_trans_6"/>
</dbReference>
<dbReference type="InterPro" id="IPR029044">
    <property type="entry name" value="Nucleotide-diphossugar_trans"/>
</dbReference>
<dbReference type="PANTHER" id="PTHR10462:SF33">
    <property type="entry name" value="ALPHA-1,3-GALACTOSYLTRANSFERASE 2"/>
    <property type="match status" value="1"/>
</dbReference>
<dbReference type="PANTHER" id="PTHR10462">
    <property type="entry name" value="GLYCOSYLTRANSFERASE-RELATED"/>
    <property type="match status" value="1"/>
</dbReference>
<dbReference type="Pfam" id="PF03414">
    <property type="entry name" value="Glyco_transf_6"/>
    <property type="match status" value="1"/>
</dbReference>
<dbReference type="SUPFAM" id="SSF53448">
    <property type="entry name" value="Nucleotide-diphospho-sugar transferases"/>
    <property type="match status" value="1"/>
</dbReference>